<protein>
    <recommendedName>
        <fullName evidence="1">UDP-N-acetylmuramoylalanine--D-glutamate ligase</fullName>
        <ecNumber evidence="1">6.3.2.9</ecNumber>
    </recommendedName>
    <alternativeName>
        <fullName evidence="1">D-glutamic acid-adding enzyme</fullName>
    </alternativeName>
    <alternativeName>
        <fullName evidence="1">UDP-N-acetylmuramoyl-L-alanyl-D-glutamate synthetase</fullName>
    </alternativeName>
</protein>
<keyword id="KW-0067">ATP-binding</keyword>
<keyword id="KW-0131">Cell cycle</keyword>
<keyword id="KW-0132">Cell division</keyword>
<keyword id="KW-0133">Cell shape</keyword>
<keyword id="KW-0961">Cell wall biogenesis/degradation</keyword>
<keyword id="KW-0963">Cytoplasm</keyword>
<keyword id="KW-0436">Ligase</keyword>
<keyword id="KW-0547">Nucleotide-binding</keyword>
<keyword id="KW-0573">Peptidoglycan synthesis</keyword>
<keyword id="KW-1185">Reference proteome</keyword>
<evidence type="ECO:0000255" key="1">
    <source>
        <dbReference type="HAMAP-Rule" id="MF_00639"/>
    </source>
</evidence>
<reference key="1">
    <citation type="journal article" date="2003" name="Proc. Natl. Acad. Sci. U.S.A.">
        <title>Reductive genome evolution in Buchnera aphidicola.</title>
        <authorList>
            <person name="van Ham R.C.H.J."/>
            <person name="Kamerbeek J."/>
            <person name="Palacios C."/>
            <person name="Rausell C."/>
            <person name="Abascal F."/>
            <person name="Bastolla U."/>
            <person name="Fernandez J.M."/>
            <person name="Jimenez L."/>
            <person name="Postigo M."/>
            <person name="Silva F.J."/>
            <person name="Tamames J."/>
            <person name="Viguera E."/>
            <person name="Latorre A."/>
            <person name="Valencia A."/>
            <person name="Moran F."/>
            <person name="Moya A."/>
        </authorList>
    </citation>
    <scope>NUCLEOTIDE SEQUENCE [LARGE SCALE GENOMIC DNA]</scope>
    <source>
        <strain>Bp</strain>
    </source>
</reference>
<name>MURD_BUCBP</name>
<organism>
    <name type="scientific">Buchnera aphidicola subsp. Baizongia pistaciae (strain Bp)</name>
    <dbReference type="NCBI Taxonomy" id="224915"/>
    <lineage>
        <taxon>Bacteria</taxon>
        <taxon>Pseudomonadati</taxon>
        <taxon>Pseudomonadota</taxon>
        <taxon>Gammaproteobacteria</taxon>
        <taxon>Enterobacterales</taxon>
        <taxon>Erwiniaceae</taxon>
        <taxon>Buchnera</taxon>
    </lineage>
</organism>
<comment type="function">
    <text evidence="1">Cell wall formation. Catalyzes the addition of glutamate to the nucleotide precursor UDP-N-acetylmuramoyl-L-alanine (UMA).</text>
</comment>
<comment type="catalytic activity">
    <reaction evidence="1">
        <text>UDP-N-acetyl-alpha-D-muramoyl-L-alanine + D-glutamate + ATP = UDP-N-acetyl-alpha-D-muramoyl-L-alanyl-D-glutamate + ADP + phosphate + H(+)</text>
        <dbReference type="Rhea" id="RHEA:16429"/>
        <dbReference type="ChEBI" id="CHEBI:15378"/>
        <dbReference type="ChEBI" id="CHEBI:29986"/>
        <dbReference type="ChEBI" id="CHEBI:30616"/>
        <dbReference type="ChEBI" id="CHEBI:43474"/>
        <dbReference type="ChEBI" id="CHEBI:83898"/>
        <dbReference type="ChEBI" id="CHEBI:83900"/>
        <dbReference type="ChEBI" id="CHEBI:456216"/>
        <dbReference type="EC" id="6.3.2.9"/>
    </reaction>
</comment>
<comment type="pathway">
    <text evidence="1">Cell wall biogenesis; peptidoglycan biosynthesis.</text>
</comment>
<comment type="subcellular location">
    <subcellularLocation>
        <location evidence="1">Cytoplasm</location>
    </subcellularLocation>
</comment>
<comment type="similarity">
    <text evidence="1">Belongs to the MurCDEF family.</text>
</comment>
<dbReference type="EC" id="6.3.2.9" evidence="1"/>
<dbReference type="EMBL" id="AE016826">
    <property type="protein sequence ID" value="AAO26932.1"/>
    <property type="molecule type" value="Genomic_DNA"/>
</dbReference>
<dbReference type="RefSeq" id="WP_011091333.1">
    <property type="nucleotide sequence ID" value="NC_004545.1"/>
</dbReference>
<dbReference type="SMR" id="Q89AQ2"/>
<dbReference type="STRING" id="224915.bbp_200"/>
<dbReference type="KEGG" id="bab:bbp_200"/>
<dbReference type="eggNOG" id="COG0771">
    <property type="taxonomic scope" value="Bacteria"/>
</dbReference>
<dbReference type="HOGENOM" id="CLU_032540_1_0_6"/>
<dbReference type="OrthoDB" id="9809796at2"/>
<dbReference type="UniPathway" id="UPA00219"/>
<dbReference type="Proteomes" id="UP000000601">
    <property type="component" value="Chromosome"/>
</dbReference>
<dbReference type="GO" id="GO:0005737">
    <property type="term" value="C:cytoplasm"/>
    <property type="evidence" value="ECO:0007669"/>
    <property type="project" value="UniProtKB-SubCell"/>
</dbReference>
<dbReference type="GO" id="GO:0005524">
    <property type="term" value="F:ATP binding"/>
    <property type="evidence" value="ECO:0007669"/>
    <property type="project" value="UniProtKB-UniRule"/>
</dbReference>
<dbReference type="GO" id="GO:0008764">
    <property type="term" value="F:UDP-N-acetylmuramoylalanine-D-glutamate ligase activity"/>
    <property type="evidence" value="ECO:0007669"/>
    <property type="project" value="UniProtKB-UniRule"/>
</dbReference>
<dbReference type="GO" id="GO:0051301">
    <property type="term" value="P:cell division"/>
    <property type="evidence" value="ECO:0007669"/>
    <property type="project" value="UniProtKB-KW"/>
</dbReference>
<dbReference type="GO" id="GO:0071555">
    <property type="term" value="P:cell wall organization"/>
    <property type="evidence" value="ECO:0007669"/>
    <property type="project" value="UniProtKB-KW"/>
</dbReference>
<dbReference type="GO" id="GO:0009252">
    <property type="term" value="P:peptidoglycan biosynthetic process"/>
    <property type="evidence" value="ECO:0007669"/>
    <property type="project" value="UniProtKB-UniRule"/>
</dbReference>
<dbReference type="GO" id="GO:0008360">
    <property type="term" value="P:regulation of cell shape"/>
    <property type="evidence" value="ECO:0007669"/>
    <property type="project" value="UniProtKB-KW"/>
</dbReference>
<dbReference type="Gene3D" id="3.90.190.20">
    <property type="entry name" value="Mur ligase, C-terminal domain"/>
    <property type="match status" value="1"/>
</dbReference>
<dbReference type="Gene3D" id="3.40.1190.10">
    <property type="entry name" value="Mur-like, catalytic domain"/>
    <property type="match status" value="1"/>
</dbReference>
<dbReference type="Gene3D" id="3.40.50.720">
    <property type="entry name" value="NAD(P)-binding Rossmann-like Domain"/>
    <property type="match status" value="1"/>
</dbReference>
<dbReference type="HAMAP" id="MF_00639">
    <property type="entry name" value="MurD"/>
    <property type="match status" value="1"/>
</dbReference>
<dbReference type="InterPro" id="IPR036565">
    <property type="entry name" value="Mur-like_cat_sf"/>
</dbReference>
<dbReference type="InterPro" id="IPR004101">
    <property type="entry name" value="Mur_ligase_C"/>
</dbReference>
<dbReference type="InterPro" id="IPR036615">
    <property type="entry name" value="Mur_ligase_C_dom_sf"/>
</dbReference>
<dbReference type="InterPro" id="IPR013221">
    <property type="entry name" value="Mur_ligase_cen"/>
</dbReference>
<dbReference type="InterPro" id="IPR005762">
    <property type="entry name" value="MurD"/>
</dbReference>
<dbReference type="NCBIfam" id="TIGR01087">
    <property type="entry name" value="murD"/>
    <property type="match status" value="1"/>
</dbReference>
<dbReference type="PANTHER" id="PTHR43692">
    <property type="entry name" value="UDP-N-ACETYLMURAMOYLALANINE--D-GLUTAMATE LIGASE"/>
    <property type="match status" value="1"/>
</dbReference>
<dbReference type="PANTHER" id="PTHR43692:SF1">
    <property type="entry name" value="UDP-N-ACETYLMURAMOYLALANINE--D-GLUTAMATE LIGASE"/>
    <property type="match status" value="1"/>
</dbReference>
<dbReference type="Pfam" id="PF02875">
    <property type="entry name" value="Mur_ligase_C"/>
    <property type="match status" value="1"/>
</dbReference>
<dbReference type="Pfam" id="PF08245">
    <property type="entry name" value="Mur_ligase_M"/>
    <property type="match status" value="1"/>
</dbReference>
<dbReference type="Pfam" id="PF21799">
    <property type="entry name" value="MurD-like_N"/>
    <property type="match status" value="1"/>
</dbReference>
<dbReference type="SUPFAM" id="SSF51984">
    <property type="entry name" value="MurCD N-terminal domain"/>
    <property type="match status" value="1"/>
</dbReference>
<dbReference type="SUPFAM" id="SSF53623">
    <property type="entry name" value="MurD-like peptide ligases, catalytic domain"/>
    <property type="match status" value="1"/>
</dbReference>
<dbReference type="SUPFAM" id="SSF53244">
    <property type="entry name" value="MurD-like peptide ligases, peptide-binding domain"/>
    <property type="match status" value="1"/>
</dbReference>
<sequence length="442" mass="50066">MTRNYLHKKILIFGMGLTGISCLNFFLSKGIYPKIMDTDKRPKHIEKIIKFKNICYHTGSVNYSWILQSNLIIVSPGITPSHPALKFATKKNIEIIGDIELFVQETKVPIIAITGSNGKSSVTKIVKEIIQKAGFTTYIGGNIGIPALNIVNKFAHFFILELSSFQLERTFSLKAYIATILNITPDHLNRYSSDIKEYEKAKQKIYKNSKICIINVDNPVTINRQAQLTKCISFGVHSGDYHLSHTYTNTWLCYKSLKLINTKKLKLSGRHNYINMLSALAIVHELKISFKISVRILKNFLGLPHRCQKVYKNNNITWINDSKSTNIASTKSAIQSINTKGKIRLILGGDKKSSNLNLLKPILKNNAIVIYCYGKDKKELFNLYPHKSKIFETLQEVMQHISVQVQPGDVVLLSPACSSLDQFSGFEERGNTFVKLIQELIH</sequence>
<proteinExistence type="inferred from homology"/>
<feature type="chain" id="PRO_0000108985" description="UDP-N-acetylmuramoylalanine--D-glutamate ligase">
    <location>
        <begin position="1"/>
        <end position="442"/>
    </location>
</feature>
<gene>
    <name evidence="1" type="primary">murD</name>
    <name type="ordered locus">bbp_200</name>
</gene>
<accession>Q89AQ2</accession>